<evidence type="ECO:0000255" key="1">
    <source>
        <dbReference type="HAMAP-Rule" id="MF_00051"/>
    </source>
</evidence>
<proteinExistence type="inferred from homology"/>
<sequence length="417" mass="44844">MFSRDLTIAKYDADLFAAMEQEALRQEEHIELIASENYTSPAVMEAQGSALTNKYAEGYPGKRYYGGCEYVDVIEQLAIDRAKELFGADYANVQPHAGSQANSAVYLALLQGGDTILGMSLAHGGHLTHGASVSSSGKLYNAVQYGIDANGMIDYDEVERLAVEHKPKMIVAGFSAYSQILDFPRFRAIADKVGAYLFVDMAHVAGLVAAGVYPNPVPFADVVTTTTHKTLRGPRGGLILARANAEIEKKLNSAVFPGSQGGPLEHVIAAKAVCFKEALQPEFKTYQQQVVKNAKAMAGVFIERGFDVVSGGTENHLFLLSLIKQDISGKDADAALGRAFITVNKNSVPNDPRSPFVTSGLRFGTPAVTTRGFKEAECKELAGWICDILADLNNEAVIDAVREKVKAICAKLPVYGA</sequence>
<protein>
    <recommendedName>
        <fullName evidence="1">Serine hydroxymethyltransferase 1</fullName>
        <shortName evidence="1">SHMT 1</shortName>
        <shortName evidence="1">Serine methylase 1</shortName>
        <ecNumber evidence="1">2.1.2.1</ecNumber>
    </recommendedName>
</protein>
<comment type="function">
    <text evidence="1">Catalyzes the reversible interconversion of serine and glycine with tetrahydrofolate (THF) serving as the one-carbon carrier. This reaction serves as the major source of one-carbon groups required for the biosynthesis of purines, thymidylate, methionine, and other important biomolecules. Also exhibits THF-independent aldolase activity toward beta-hydroxyamino acids, producing glycine and aldehydes, via a retro-aldol mechanism.</text>
</comment>
<comment type="catalytic activity">
    <reaction evidence="1">
        <text>(6R)-5,10-methylene-5,6,7,8-tetrahydrofolate + glycine + H2O = (6S)-5,6,7,8-tetrahydrofolate + L-serine</text>
        <dbReference type="Rhea" id="RHEA:15481"/>
        <dbReference type="ChEBI" id="CHEBI:15377"/>
        <dbReference type="ChEBI" id="CHEBI:15636"/>
        <dbReference type="ChEBI" id="CHEBI:33384"/>
        <dbReference type="ChEBI" id="CHEBI:57305"/>
        <dbReference type="ChEBI" id="CHEBI:57453"/>
        <dbReference type="EC" id="2.1.2.1"/>
    </reaction>
</comment>
<comment type="cofactor">
    <cofactor evidence="1">
        <name>pyridoxal 5'-phosphate</name>
        <dbReference type="ChEBI" id="CHEBI:597326"/>
    </cofactor>
</comment>
<comment type="pathway">
    <text evidence="1">One-carbon metabolism; tetrahydrofolate interconversion.</text>
</comment>
<comment type="pathway">
    <text evidence="1">Amino-acid biosynthesis; glycine biosynthesis; glycine from L-serine: step 1/1.</text>
</comment>
<comment type="subunit">
    <text evidence="1">Homodimer.</text>
</comment>
<comment type="subcellular location">
    <subcellularLocation>
        <location evidence="1">Cytoplasm</location>
    </subcellularLocation>
</comment>
<comment type="similarity">
    <text evidence="1">Belongs to the SHMT family.</text>
</comment>
<name>GLYA1_PSE14</name>
<accession>Q48DU7</accession>
<gene>
    <name evidence="1" type="primary">glyA1</name>
    <name type="ordered locus">PSPPH_4327</name>
</gene>
<reference key="1">
    <citation type="journal article" date="2005" name="J. Bacteriol.">
        <title>Whole-genome sequence analysis of Pseudomonas syringae pv. phaseolicola 1448A reveals divergence among pathovars in genes involved in virulence and transposition.</title>
        <authorList>
            <person name="Joardar V."/>
            <person name="Lindeberg M."/>
            <person name="Jackson R.W."/>
            <person name="Selengut J."/>
            <person name="Dodson R."/>
            <person name="Brinkac L.M."/>
            <person name="Daugherty S.C."/>
            <person name="DeBoy R.T."/>
            <person name="Durkin A.S."/>
            <person name="Gwinn Giglio M."/>
            <person name="Madupu R."/>
            <person name="Nelson W.C."/>
            <person name="Rosovitz M.J."/>
            <person name="Sullivan S.A."/>
            <person name="Crabtree J."/>
            <person name="Creasy T."/>
            <person name="Davidsen T.M."/>
            <person name="Haft D.H."/>
            <person name="Zafar N."/>
            <person name="Zhou L."/>
            <person name="Halpin R."/>
            <person name="Holley T."/>
            <person name="Khouri H.M."/>
            <person name="Feldblyum T.V."/>
            <person name="White O."/>
            <person name="Fraser C.M."/>
            <person name="Chatterjee A.K."/>
            <person name="Cartinhour S."/>
            <person name="Schneider D."/>
            <person name="Mansfield J.W."/>
            <person name="Collmer A."/>
            <person name="Buell R."/>
        </authorList>
    </citation>
    <scope>NUCLEOTIDE SEQUENCE [LARGE SCALE GENOMIC DNA]</scope>
    <source>
        <strain>1448A / Race 6</strain>
    </source>
</reference>
<dbReference type="EC" id="2.1.2.1" evidence="1"/>
<dbReference type="EMBL" id="CP000058">
    <property type="protein sequence ID" value="AAZ36341.1"/>
    <property type="molecule type" value="Genomic_DNA"/>
</dbReference>
<dbReference type="SMR" id="Q48DU7"/>
<dbReference type="KEGG" id="psp:PSPPH_4327"/>
<dbReference type="eggNOG" id="COG0112">
    <property type="taxonomic scope" value="Bacteria"/>
</dbReference>
<dbReference type="HOGENOM" id="CLU_022477_2_1_6"/>
<dbReference type="UniPathway" id="UPA00193"/>
<dbReference type="UniPathway" id="UPA00288">
    <property type="reaction ID" value="UER01023"/>
</dbReference>
<dbReference type="Proteomes" id="UP000000551">
    <property type="component" value="Chromosome"/>
</dbReference>
<dbReference type="GO" id="GO:0005829">
    <property type="term" value="C:cytosol"/>
    <property type="evidence" value="ECO:0007669"/>
    <property type="project" value="TreeGrafter"/>
</dbReference>
<dbReference type="GO" id="GO:0004372">
    <property type="term" value="F:glycine hydroxymethyltransferase activity"/>
    <property type="evidence" value="ECO:0007669"/>
    <property type="project" value="UniProtKB-UniRule"/>
</dbReference>
<dbReference type="GO" id="GO:0030170">
    <property type="term" value="F:pyridoxal phosphate binding"/>
    <property type="evidence" value="ECO:0007669"/>
    <property type="project" value="UniProtKB-UniRule"/>
</dbReference>
<dbReference type="GO" id="GO:0019264">
    <property type="term" value="P:glycine biosynthetic process from serine"/>
    <property type="evidence" value="ECO:0007669"/>
    <property type="project" value="UniProtKB-UniRule"/>
</dbReference>
<dbReference type="GO" id="GO:0035999">
    <property type="term" value="P:tetrahydrofolate interconversion"/>
    <property type="evidence" value="ECO:0007669"/>
    <property type="project" value="UniProtKB-UniRule"/>
</dbReference>
<dbReference type="CDD" id="cd00378">
    <property type="entry name" value="SHMT"/>
    <property type="match status" value="1"/>
</dbReference>
<dbReference type="FunFam" id="3.40.640.10:FF:000001">
    <property type="entry name" value="Serine hydroxymethyltransferase"/>
    <property type="match status" value="1"/>
</dbReference>
<dbReference type="FunFam" id="3.90.1150.10:FF:000003">
    <property type="entry name" value="Serine hydroxymethyltransferase"/>
    <property type="match status" value="1"/>
</dbReference>
<dbReference type="Gene3D" id="3.90.1150.10">
    <property type="entry name" value="Aspartate Aminotransferase, domain 1"/>
    <property type="match status" value="1"/>
</dbReference>
<dbReference type="Gene3D" id="3.40.640.10">
    <property type="entry name" value="Type I PLP-dependent aspartate aminotransferase-like (Major domain)"/>
    <property type="match status" value="1"/>
</dbReference>
<dbReference type="HAMAP" id="MF_00051">
    <property type="entry name" value="SHMT"/>
    <property type="match status" value="1"/>
</dbReference>
<dbReference type="InterPro" id="IPR015424">
    <property type="entry name" value="PyrdxlP-dep_Trfase"/>
</dbReference>
<dbReference type="InterPro" id="IPR015421">
    <property type="entry name" value="PyrdxlP-dep_Trfase_major"/>
</dbReference>
<dbReference type="InterPro" id="IPR015422">
    <property type="entry name" value="PyrdxlP-dep_Trfase_small"/>
</dbReference>
<dbReference type="InterPro" id="IPR001085">
    <property type="entry name" value="Ser_HO-MeTrfase"/>
</dbReference>
<dbReference type="InterPro" id="IPR049943">
    <property type="entry name" value="Ser_HO-MeTrfase-like"/>
</dbReference>
<dbReference type="InterPro" id="IPR019798">
    <property type="entry name" value="Ser_HO-MeTrfase_PLP_BS"/>
</dbReference>
<dbReference type="InterPro" id="IPR039429">
    <property type="entry name" value="SHMT-like_dom"/>
</dbReference>
<dbReference type="NCBIfam" id="NF000586">
    <property type="entry name" value="PRK00011.1"/>
    <property type="match status" value="1"/>
</dbReference>
<dbReference type="PANTHER" id="PTHR11680">
    <property type="entry name" value="SERINE HYDROXYMETHYLTRANSFERASE"/>
    <property type="match status" value="1"/>
</dbReference>
<dbReference type="PANTHER" id="PTHR11680:SF50">
    <property type="entry name" value="SERINE HYDROXYMETHYLTRANSFERASE"/>
    <property type="match status" value="1"/>
</dbReference>
<dbReference type="Pfam" id="PF00464">
    <property type="entry name" value="SHMT"/>
    <property type="match status" value="1"/>
</dbReference>
<dbReference type="PIRSF" id="PIRSF000412">
    <property type="entry name" value="SHMT"/>
    <property type="match status" value="1"/>
</dbReference>
<dbReference type="SUPFAM" id="SSF53383">
    <property type="entry name" value="PLP-dependent transferases"/>
    <property type="match status" value="1"/>
</dbReference>
<dbReference type="PROSITE" id="PS00096">
    <property type="entry name" value="SHMT"/>
    <property type="match status" value="1"/>
</dbReference>
<organism>
    <name type="scientific">Pseudomonas savastanoi pv. phaseolicola (strain 1448A / Race 6)</name>
    <name type="common">Pseudomonas syringae pv. phaseolicola (strain 1448A / Race 6)</name>
    <dbReference type="NCBI Taxonomy" id="264730"/>
    <lineage>
        <taxon>Bacteria</taxon>
        <taxon>Pseudomonadati</taxon>
        <taxon>Pseudomonadota</taxon>
        <taxon>Gammaproteobacteria</taxon>
        <taxon>Pseudomonadales</taxon>
        <taxon>Pseudomonadaceae</taxon>
        <taxon>Pseudomonas</taxon>
    </lineage>
</organism>
<keyword id="KW-0028">Amino-acid biosynthesis</keyword>
<keyword id="KW-0963">Cytoplasm</keyword>
<keyword id="KW-0554">One-carbon metabolism</keyword>
<keyword id="KW-0663">Pyridoxal phosphate</keyword>
<keyword id="KW-0808">Transferase</keyword>
<feature type="chain" id="PRO_0000235007" description="Serine hydroxymethyltransferase 1">
    <location>
        <begin position="1"/>
        <end position="417"/>
    </location>
</feature>
<feature type="binding site" evidence="1">
    <location>
        <position position="121"/>
    </location>
    <ligand>
        <name>(6S)-5,6,7,8-tetrahydrofolate</name>
        <dbReference type="ChEBI" id="CHEBI:57453"/>
    </ligand>
</feature>
<feature type="binding site" evidence="1">
    <location>
        <begin position="125"/>
        <end position="127"/>
    </location>
    <ligand>
        <name>(6S)-5,6,7,8-tetrahydrofolate</name>
        <dbReference type="ChEBI" id="CHEBI:57453"/>
    </ligand>
</feature>
<feature type="binding site" evidence="1">
    <location>
        <begin position="354"/>
        <end position="356"/>
    </location>
    <ligand>
        <name>(6S)-5,6,7,8-tetrahydrofolate</name>
        <dbReference type="ChEBI" id="CHEBI:57453"/>
    </ligand>
</feature>
<feature type="site" description="Plays an important role in substrate specificity" evidence="1">
    <location>
        <position position="228"/>
    </location>
</feature>
<feature type="modified residue" description="N6-(pyridoxal phosphate)lysine" evidence="1">
    <location>
        <position position="229"/>
    </location>
</feature>